<dbReference type="EC" id="5.6.2.1" evidence="1"/>
<dbReference type="EMBL" id="AE006468">
    <property type="protein sequence ID" value="AAL20632.1"/>
    <property type="molecule type" value="Genomic_DNA"/>
</dbReference>
<dbReference type="EMBL" id="M15040">
    <property type="protein sequence ID" value="AAA27044.1"/>
    <property type="molecule type" value="Genomic_DNA"/>
</dbReference>
<dbReference type="RefSeq" id="NP_460673.1">
    <property type="nucleotide sequence ID" value="NC_003197.2"/>
</dbReference>
<dbReference type="RefSeq" id="WP_000513593.1">
    <property type="nucleotide sequence ID" value="NC_003197.2"/>
</dbReference>
<dbReference type="SMR" id="P0A2I1"/>
<dbReference type="STRING" id="99287.STM1714"/>
<dbReference type="PaxDb" id="99287-STM1714"/>
<dbReference type="GeneID" id="1253233"/>
<dbReference type="KEGG" id="stm:STM1714"/>
<dbReference type="PATRIC" id="fig|99287.12.peg.1811"/>
<dbReference type="HOGENOM" id="CLU_002929_4_3_6"/>
<dbReference type="OMA" id="PECKYTR"/>
<dbReference type="PhylomeDB" id="P0A2I1"/>
<dbReference type="BioCyc" id="SENT99287:STM1714-MONOMER"/>
<dbReference type="Proteomes" id="UP000001014">
    <property type="component" value="Chromosome"/>
</dbReference>
<dbReference type="GO" id="GO:0005694">
    <property type="term" value="C:chromosome"/>
    <property type="evidence" value="ECO:0007669"/>
    <property type="project" value="InterPro"/>
</dbReference>
<dbReference type="GO" id="GO:0003677">
    <property type="term" value="F:DNA binding"/>
    <property type="evidence" value="ECO:0007669"/>
    <property type="project" value="UniProtKB-KW"/>
</dbReference>
<dbReference type="GO" id="GO:0003917">
    <property type="term" value="F:DNA topoisomerase type I (single strand cut, ATP-independent) activity"/>
    <property type="evidence" value="ECO:0007669"/>
    <property type="project" value="UniProtKB-UniRule"/>
</dbReference>
<dbReference type="GO" id="GO:0008270">
    <property type="term" value="F:zinc ion binding"/>
    <property type="evidence" value="ECO:0007669"/>
    <property type="project" value="UniProtKB-KW"/>
</dbReference>
<dbReference type="GO" id="GO:0006265">
    <property type="term" value="P:DNA topological change"/>
    <property type="evidence" value="ECO:0007669"/>
    <property type="project" value="UniProtKB-UniRule"/>
</dbReference>
<dbReference type="CDD" id="cd00186">
    <property type="entry name" value="TOP1Ac"/>
    <property type="match status" value="1"/>
</dbReference>
<dbReference type="CDD" id="cd03363">
    <property type="entry name" value="TOPRIM_TopoIA_TopoI"/>
    <property type="match status" value="1"/>
</dbReference>
<dbReference type="FunFam" id="1.10.290.10:FF:000002">
    <property type="entry name" value="DNA topoisomerase 1"/>
    <property type="match status" value="1"/>
</dbReference>
<dbReference type="FunFam" id="2.20.25.10:FF:000013">
    <property type="entry name" value="DNA topoisomerase 1"/>
    <property type="match status" value="1"/>
</dbReference>
<dbReference type="FunFam" id="3.30.65.10:FF:000001">
    <property type="entry name" value="DNA topoisomerase 1"/>
    <property type="match status" value="1"/>
</dbReference>
<dbReference type="FunFam" id="3.30.65.10:FF:000002">
    <property type="entry name" value="DNA topoisomerase 1"/>
    <property type="match status" value="1"/>
</dbReference>
<dbReference type="FunFam" id="3.30.65.10:FF:000003">
    <property type="entry name" value="DNA topoisomerase 1"/>
    <property type="match status" value="1"/>
</dbReference>
<dbReference type="FunFam" id="3.40.50.140:FF:000001">
    <property type="entry name" value="DNA topoisomerase 1"/>
    <property type="match status" value="1"/>
</dbReference>
<dbReference type="Gene3D" id="2.20.25.10">
    <property type="match status" value="1"/>
</dbReference>
<dbReference type="Gene3D" id="3.40.50.140">
    <property type="match status" value="1"/>
</dbReference>
<dbReference type="Gene3D" id="3.30.65.10">
    <property type="entry name" value="Bacterial Topoisomerase I, domain 1"/>
    <property type="match status" value="3"/>
</dbReference>
<dbReference type="Gene3D" id="1.10.460.10">
    <property type="entry name" value="Topoisomerase I, domain 2"/>
    <property type="match status" value="1"/>
</dbReference>
<dbReference type="Gene3D" id="2.70.20.10">
    <property type="entry name" value="Topoisomerase I, domain 3"/>
    <property type="match status" value="1"/>
</dbReference>
<dbReference type="Gene3D" id="1.10.290.10">
    <property type="entry name" value="Topoisomerase I, domain 4"/>
    <property type="match status" value="1"/>
</dbReference>
<dbReference type="HAMAP" id="MF_00952">
    <property type="entry name" value="Topoisom_1_prok"/>
    <property type="match status" value="1"/>
</dbReference>
<dbReference type="InterPro" id="IPR049330">
    <property type="entry name" value="TOP1_Znf"/>
</dbReference>
<dbReference type="InterPro" id="IPR000380">
    <property type="entry name" value="Topo_IA"/>
</dbReference>
<dbReference type="InterPro" id="IPR003601">
    <property type="entry name" value="Topo_IA_2"/>
</dbReference>
<dbReference type="InterPro" id="IPR023406">
    <property type="entry name" value="Topo_IA_AS"/>
</dbReference>
<dbReference type="InterPro" id="IPR013497">
    <property type="entry name" value="Topo_IA_cen"/>
</dbReference>
<dbReference type="InterPro" id="IPR013824">
    <property type="entry name" value="Topo_IA_cen_sub1"/>
</dbReference>
<dbReference type="InterPro" id="IPR013825">
    <property type="entry name" value="Topo_IA_cen_sub2"/>
</dbReference>
<dbReference type="InterPro" id="IPR013826">
    <property type="entry name" value="Topo_IA_cen_sub3"/>
</dbReference>
<dbReference type="InterPro" id="IPR023405">
    <property type="entry name" value="Topo_IA_core_domain"/>
</dbReference>
<dbReference type="InterPro" id="IPR003602">
    <property type="entry name" value="Topo_IA_DNA-bd_dom"/>
</dbReference>
<dbReference type="InterPro" id="IPR013498">
    <property type="entry name" value="Topo_IA_Znf"/>
</dbReference>
<dbReference type="InterPro" id="IPR005733">
    <property type="entry name" value="TopoI_bac-type"/>
</dbReference>
<dbReference type="InterPro" id="IPR013263">
    <property type="entry name" value="TopoI_Znr_bac"/>
</dbReference>
<dbReference type="InterPro" id="IPR028612">
    <property type="entry name" value="Topoisom_1_IA"/>
</dbReference>
<dbReference type="InterPro" id="IPR006171">
    <property type="entry name" value="TOPRIM_dom"/>
</dbReference>
<dbReference type="InterPro" id="IPR034149">
    <property type="entry name" value="TOPRIM_TopoI"/>
</dbReference>
<dbReference type="NCBIfam" id="TIGR01051">
    <property type="entry name" value="topA_bact"/>
    <property type="match status" value="1"/>
</dbReference>
<dbReference type="PANTHER" id="PTHR42785:SF1">
    <property type="entry name" value="DNA TOPOISOMERASE"/>
    <property type="match status" value="1"/>
</dbReference>
<dbReference type="PANTHER" id="PTHR42785">
    <property type="entry name" value="DNA TOPOISOMERASE, TYPE IA, CORE"/>
    <property type="match status" value="1"/>
</dbReference>
<dbReference type="Pfam" id="PF01131">
    <property type="entry name" value="Topoisom_bac"/>
    <property type="match status" value="1"/>
</dbReference>
<dbReference type="Pfam" id="PF01751">
    <property type="entry name" value="Toprim"/>
    <property type="match status" value="1"/>
</dbReference>
<dbReference type="Pfam" id="PF21372">
    <property type="entry name" value="Zn_ribbon_bTOP1"/>
    <property type="match status" value="1"/>
</dbReference>
<dbReference type="Pfam" id="PF01396">
    <property type="entry name" value="Zn_ribbon_Top1"/>
    <property type="match status" value="2"/>
</dbReference>
<dbReference type="Pfam" id="PF08272">
    <property type="entry name" value="Zn_Ribbon_Topo"/>
    <property type="match status" value="2"/>
</dbReference>
<dbReference type="PRINTS" id="PR00417">
    <property type="entry name" value="PRTPISMRASEI"/>
</dbReference>
<dbReference type="SMART" id="SM00437">
    <property type="entry name" value="TOP1Ac"/>
    <property type="match status" value="1"/>
</dbReference>
<dbReference type="SMART" id="SM00436">
    <property type="entry name" value="TOP1Bc"/>
    <property type="match status" value="1"/>
</dbReference>
<dbReference type="SMART" id="SM00493">
    <property type="entry name" value="TOPRIM"/>
    <property type="match status" value="1"/>
</dbReference>
<dbReference type="SUPFAM" id="SSF56712">
    <property type="entry name" value="Prokaryotic type I DNA topoisomerase"/>
    <property type="match status" value="1"/>
</dbReference>
<dbReference type="SUPFAM" id="SSF57783">
    <property type="entry name" value="Zinc beta-ribbon"/>
    <property type="match status" value="3"/>
</dbReference>
<dbReference type="PROSITE" id="PS00396">
    <property type="entry name" value="TOPO_IA_1"/>
    <property type="match status" value="1"/>
</dbReference>
<dbReference type="PROSITE" id="PS52039">
    <property type="entry name" value="TOPO_IA_2"/>
    <property type="match status" value="1"/>
</dbReference>
<dbReference type="PROSITE" id="PS50880">
    <property type="entry name" value="TOPRIM"/>
    <property type="match status" value="1"/>
</dbReference>
<proteinExistence type="inferred from homology"/>
<comment type="function">
    <text evidence="1">Releases the supercoiling and torsional tension of DNA, which is introduced during the DNA replication and transcription, by transiently cleaving and rejoining one strand of the DNA duplex. Introduces a single-strand break via transesterification at a target site in duplex DNA. The scissile phosphodiester is attacked by the catalytic tyrosine of the enzyme, resulting in the formation of a DNA-(5'-phosphotyrosyl)-enzyme intermediate and the expulsion of a 3'-OH DNA strand. The free DNA strand then undergoes passage around the unbroken strand, thus removing DNA supercoils. Finally, in the religation step, the DNA 3'-OH attacks the covalent intermediate to expel the active-site tyrosine and restore the DNA phosphodiester backbone.</text>
</comment>
<comment type="catalytic activity">
    <reaction evidence="1">
        <text>ATP-independent breakage of single-stranded DNA, followed by passage and rejoining.</text>
        <dbReference type="EC" id="5.6.2.1"/>
    </reaction>
</comment>
<comment type="cofactor">
    <cofactor evidence="1">
        <name>Mg(2+)</name>
        <dbReference type="ChEBI" id="CHEBI:18420"/>
    </cofactor>
</comment>
<comment type="subunit">
    <text evidence="1">Monomer.</text>
</comment>
<comment type="similarity">
    <text evidence="1">Belongs to the type IA topoisomerase family.</text>
</comment>
<gene>
    <name evidence="1" type="primary">topA</name>
    <name type="ordered locus">STM1714</name>
</gene>
<name>TOP1_SALTY</name>
<evidence type="ECO:0000255" key="1">
    <source>
        <dbReference type="HAMAP-Rule" id="MF_00952"/>
    </source>
</evidence>
<evidence type="ECO:0000255" key="2">
    <source>
        <dbReference type="PROSITE-ProRule" id="PRU01383"/>
    </source>
</evidence>
<evidence type="ECO:0000256" key="3">
    <source>
        <dbReference type="SAM" id="MobiDB-lite"/>
    </source>
</evidence>
<protein>
    <recommendedName>
        <fullName evidence="1">DNA topoisomerase 1</fullName>
        <ecNumber evidence="1">5.6.2.1</ecNumber>
    </recommendedName>
    <alternativeName>
        <fullName evidence="1">DNA topoisomerase I</fullName>
    </alternativeName>
    <alternativeName>
        <fullName>Omega-protein</fullName>
    </alternativeName>
    <alternativeName>
        <fullName>Relaxing enzyme</fullName>
    </alternativeName>
    <alternativeName>
        <fullName>Swivelase</fullName>
    </alternativeName>
    <alternativeName>
        <fullName>Untwisting enzyme</fullName>
    </alternativeName>
</protein>
<reference key="1">
    <citation type="journal article" date="2001" name="Nature">
        <title>Complete genome sequence of Salmonella enterica serovar Typhimurium LT2.</title>
        <authorList>
            <person name="McClelland M."/>
            <person name="Sanderson K.E."/>
            <person name="Spieth J."/>
            <person name="Clifton S.W."/>
            <person name="Latreille P."/>
            <person name="Courtney L."/>
            <person name="Porwollik S."/>
            <person name="Ali J."/>
            <person name="Dante M."/>
            <person name="Du F."/>
            <person name="Hou S."/>
            <person name="Layman D."/>
            <person name="Leonard S."/>
            <person name="Nguyen C."/>
            <person name="Scott K."/>
            <person name="Holmes A."/>
            <person name="Grewal N."/>
            <person name="Mulvaney E."/>
            <person name="Ryan E."/>
            <person name="Sun H."/>
            <person name="Florea L."/>
            <person name="Miller W."/>
            <person name="Stoneking T."/>
            <person name="Nhan M."/>
            <person name="Waterston R."/>
            <person name="Wilson R.K."/>
        </authorList>
    </citation>
    <scope>NUCLEOTIDE SEQUENCE [LARGE SCALE GENOMIC DNA]</scope>
    <source>
        <strain>LT2 / SGSC1412 / ATCC 700720</strain>
    </source>
</reference>
<reference key="2">
    <citation type="journal article" date="1987" name="J. Biol. Chem.">
        <title>DNA sequences of the cysB regions of Salmonella typhimurium and Escherichia coli.</title>
        <authorList>
            <person name="Ostrowski J."/>
            <person name="Jagura-Burdzy G."/>
            <person name="Kredich N.M."/>
        </authorList>
    </citation>
    <scope>NUCLEOTIDE SEQUENCE [GENOMIC DNA] OF 856-865</scope>
</reference>
<accession>P0A2I1</accession>
<accession>P40686</accession>
<organism>
    <name type="scientific">Salmonella typhimurium (strain LT2 / SGSC1412 / ATCC 700720)</name>
    <dbReference type="NCBI Taxonomy" id="99287"/>
    <lineage>
        <taxon>Bacteria</taxon>
        <taxon>Pseudomonadati</taxon>
        <taxon>Pseudomonadota</taxon>
        <taxon>Gammaproteobacteria</taxon>
        <taxon>Enterobacterales</taxon>
        <taxon>Enterobacteriaceae</taxon>
        <taxon>Salmonella</taxon>
    </lineage>
</organism>
<keyword id="KW-0238">DNA-binding</keyword>
<keyword id="KW-0413">Isomerase</keyword>
<keyword id="KW-0460">Magnesium</keyword>
<keyword id="KW-0479">Metal-binding</keyword>
<keyword id="KW-1185">Reference proteome</keyword>
<keyword id="KW-0677">Repeat</keyword>
<keyword id="KW-0799">Topoisomerase</keyword>
<keyword id="KW-0862">Zinc</keyword>
<keyword id="KW-0863">Zinc-finger</keyword>
<sequence>MGKALVIVESPAKAKTINKYLGNDYVVKSSVGHIRDLPTSGSAAKKSADSTSTKTAKKPKKDERGALVNRMGVDPWHNWDAHYEVLPGKEKVVSELKQLAEKADHIYLATDLDREGEAIAWHLREVIGGDDARYSRVVFNEITKNAIRQAFEQPGELNINRVNAQQARRFMDRVVGYMVSPLLWKKIARGLSAGRVQSVAVRLVVEREREIKAFVPEEFWEIDANTTTPSGEALPLQVTHQNDKPFRPVNREQTLAAVSLLEKARYSVLEREDKPTSSKPGAPFITSTLQQAASTRLGFGVKKTMMMAQRLYEAGYITYMRTDSTNLSQDAVNMVRGYIGDNFGKKYLPDNPNQYASKENSQEAHEAIRPSDVAVMAESLKDMEADAQKLYQLIWRQFVACQMTPAQYDSTTLTVGAGEFRLKARGRILRFDGWTKVMPALRKGDEDRTLPAVNKGDALTLLELTPAQHFTKPPARFSEASLVKELEKRGIGRPSTYASIISTIQDRGYVRVENRRFYAEKMGEIVTDRLEENFRELMNYDFTAQMEDSLDQVANHQAEWKAVLDNFFSDFTQQLDKAEKDPEEGGMRPNQMVLTSIDCPTCGRKMGIRTASTGVFLGCSGYALSPKERCKTTINLVPENEVLNVLEGDDAETNALRAKRRCQKCGTAMDSYLIDPKRKLHVCGNNPTCDGYEIEEGEFRIKGYDGPIVECEKCGSEMHLKMGRFGKYMACTNDECKNTRKILRNGEVAPPKEDPVPLPELPCEKSDAYFVLRDGAAGIFLAANTFPKSRETRAPLVEELYRFRDRLPEKLRYLADAPQQDPEGNKTVVRFSRKTKQQYVAAEKDGKATGWSAFFVDGKWVEGKK</sequence>
<feature type="chain" id="PRO_0000145165" description="DNA topoisomerase 1">
    <location>
        <begin position="1"/>
        <end position="865"/>
    </location>
</feature>
<feature type="domain" description="Toprim" evidence="1">
    <location>
        <begin position="3"/>
        <end position="142"/>
    </location>
</feature>
<feature type="domain" description="Topo IA-type catalytic" evidence="2">
    <location>
        <begin position="158"/>
        <end position="575"/>
    </location>
</feature>
<feature type="zinc finger region" description="C4-type 1">
    <location>
        <begin position="599"/>
        <end position="630"/>
    </location>
</feature>
<feature type="zinc finger region" description="C4-type 2">
    <location>
        <begin position="662"/>
        <end position="689"/>
    </location>
</feature>
<feature type="zinc finger region" description="C4-type 3">
    <location>
        <begin position="711"/>
        <end position="736"/>
    </location>
</feature>
<feature type="region of interest" description="Disordered" evidence="3">
    <location>
        <begin position="37"/>
        <end position="65"/>
    </location>
</feature>
<feature type="region of interest" description="Interaction with DNA" evidence="1">
    <location>
        <begin position="192"/>
        <end position="197"/>
    </location>
</feature>
<feature type="compositionally biased region" description="Low complexity" evidence="3">
    <location>
        <begin position="39"/>
        <end position="54"/>
    </location>
</feature>
<feature type="active site" description="O-(5'-phospho-DNA)-tyrosine intermediate" evidence="2">
    <location>
        <position position="319"/>
    </location>
</feature>
<feature type="binding site" evidence="1">
    <location>
        <position position="9"/>
    </location>
    <ligand>
        <name>Mg(2+)</name>
        <dbReference type="ChEBI" id="CHEBI:18420"/>
        <note>catalytic</note>
    </ligand>
</feature>
<feature type="binding site" evidence="1">
    <location>
        <position position="111"/>
    </location>
    <ligand>
        <name>Mg(2+)</name>
        <dbReference type="ChEBI" id="CHEBI:18420"/>
        <note>catalytic</note>
    </ligand>
</feature>
<feature type="site" description="Interaction with DNA" evidence="1">
    <location>
        <position position="33"/>
    </location>
</feature>
<feature type="site" description="Interaction with DNA" evidence="1">
    <location>
        <position position="168"/>
    </location>
</feature>
<feature type="site" description="Interaction with DNA" evidence="1">
    <location>
        <position position="169"/>
    </location>
</feature>
<feature type="site" description="Interaction with DNA" evidence="1">
    <location>
        <position position="172"/>
    </location>
</feature>
<feature type="site" description="Interaction with DNA" evidence="1">
    <location>
        <position position="177"/>
    </location>
</feature>
<feature type="site" description="Interaction with DNA" evidence="1">
    <location>
        <position position="184"/>
    </location>
</feature>
<feature type="site" description="Interaction with DNA" evidence="1">
    <location>
        <position position="321"/>
    </location>
</feature>
<feature type="site" description="Interaction with DNA" evidence="1">
    <location>
        <position position="507"/>
    </location>
</feature>